<protein>
    <recommendedName>
        <fullName evidence="1">Eukaryotic translation initiation factor 3 subunit B</fullName>
        <shortName evidence="1">eIF3b</shortName>
    </recommendedName>
    <alternativeName>
        <fullName evidence="1">Eukaryotic translation initiation factor 3 subunit 9</fullName>
    </alternativeName>
</protein>
<keyword id="KW-0175">Coiled coil</keyword>
<keyword id="KW-0963">Cytoplasm</keyword>
<keyword id="KW-0396">Initiation factor</keyword>
<keyword id="KW-0648">Protein biosynthesis</keyword>
<keyword id="KW-1185">Reference proteome</keyword>
<keyword id="KW-0677">Repeat</keyword>
<keyword id="KW-0694">RNA-binding</keyword>
<keyword id="KW-0853">WD repeat</keyword>
<sequence>MAKKKGDQYDSDGAEDQDYDEEPVFEDPAGFVDDVGDDELLGDFLKQKPCESDGVENVIVVDNIPVVGPARFPKLQGVLEKIFKNAGTIVNIHYPKDDEENTKGFAFIEFKNPEMAEEAVKAFNNYRLDKSHTLLVNLFSDFQKYSDIPKDWSPPESQPYKVQNDLYTFLSEPDAQDQFCVVAESTPGAVQVQFWHNTQPEPVELLTRERFTETYVKWSPLGTYIVTFHKQGVVIWGGSSFTKINKFAHSNTQYVDFSPCEQYLVTYGPNGQKIIIWDIRTGTEKRSFVSDGSSNMSMFRWSHDDKYVARMGDNAIHVYETNTFYLLDKKSIKVQGIRNFSWSPTDNIIAYWMSEDIDAPARVTLLEIPKKIEVRNKNLFNVADCKIHWQKSGDYLCVKVDRYSKSKKDKKDADVKFLGMFYNFEIFHMREKDIPVDSVEVKETILAFAWEPVGSKFSIIHGEPSNANVSFYEAKKGQEPTMLRKMEKKVCSHLFWSPRGQFIVLANLQMGSFEFVDTNDFTIMKSGDHYRASEVEWDPTGRYVVTGTSGKVKEDHGYHLWSFQGRILKRVNLKNFMLFLWRPRPPTLLPDERQKEIRKNLKKYYAQFESKDRVRMTRASKELLEKRAKLREQFVEYRAKRVNDWEEQKYRRMQLRNNMDTDTLEADPDNVEEEIVEILVREDTTLLE</sequence>
<organism>
    <name type="scientific">Culex quinquefasciatus</name>
    <name type="common">Southern house mosquito</name>
    <name type="synonym">Culex pungens</name>
    <dbReference type="NCBI Taxonomy" id="7176"/>
    <lineage>
        <taxon>Eukaryota</taxon>
        <taxon>Metazoa</taxon>
        <taxon>Ecdysozoa</taxon>
        <taxon>Arthropoda</taxon>
        <taxon>Hexapoda</taxon>
        <taxon>Insecta</taxon>
        <taxon>Pterygota</taxon>
        <taxon>Neoptera</taxon>
        <taxon>Endopterygota</taxon>
        <taxon>Diptera</taxon>
        <taxon>Nematocera</taxon>
        <taxon>Culicoidea</taxon>
        <taxon>Culicidae</taxon>
        <taxon>Culicinae</taxon>
        <taxon>Culicini</taxon>
        <taxon>Culex</taxon>
        <taxon>Culex</taxon>
    </lineage>
</organism>
<name>EIF3B_CULQU</name>
<reference key="1">
    <citation type="submission" date="2007-03" db="EMBL/GenBank/DDBJ databases">
        <title>Annotation of Culex pipiens quinquefasciatus.</title>
        <authorList>
            <consortium name="The Broad Institute Genome Sequencing Platform"/>
            <person name="Atkinson P.W."/>
            <person name="Hemingway J."/>
            <person name="Christensen B.M."/>
            <person name="Higgs S."/>
            <person name="Kodira C.D."/>
            <person name="Hannick L.I."/>
            <person name="Megy K."/>
            <person name="O'Leary S.B."/>
            <person name="Pearson M."/>
            <person name="Haas B.J."/>
            <person name="Mauceli E."/>
            <person name="Wortman J.R."/>
            <person name="Lee N.H."/>
            <person name="Guigo R."/>
            <person name="Stanke M."/>
            <person name="Alvarado L."/>
            <person name="Amedeo P."/>
            <person name="Antoine C.H."/>
            <person name="Arensburger P."/>
            <person name="Bidwell S.L."/>
            <person name="Crawford M."/>
            <person name="Camaro F."/>
            <person name="Devon K."/>
            <person name="Engels R."/>
            <person name="Hammond M."/>
            <person name="Howarth C."/>
            <person name="Koehrsen M."/>
            <person name="Lawson D."/>
            <person name="Montgomery P."/>
            <person name="Nene V."/>
            <person name="Nusbaum C."/>
            <person name="Puiu D."/>
            <person name="Romero-Severson J."/>
            <person name="Severson D.W."/>
            <person name="Shumway M."/>
            <person name="Sisk P."/>
            <person name="Stolte C."/>
            <person name="Zeng Q."/>
            <person name="Eisenstadt E."/>
            <person name="Fraser-Liggett C.M."/>
            <person name="Strausberg R."/>
            <person name="Galagan J."/>
            <person name="Birren B."/>
            <person name="Collins F.H."/>
        </authorList>
    </citation>
    <scope>NUCLEOTIDE SEQUENCE [LARGE SCALE GENOMIC DNA]</scope>
    <source>
        <strain>JHB</strain>
    </source>
</reference>
<comment type="function">
    <text evidence="1">RNA-binding component of the eukaryotic translation initiation factor 3 (eIF-3) complex, which is involved in protein synthesis of a specialized repertoire of mRNAs and, together with other initiation factors, stimulates binding of mRNA and methionyl-tRNAi to the 40S ribosome. The eIF-3 complex specifically targets and initiates translation of a subset of mRNAs involved in cell proliferation.</text>
</comment>
<comment type="subunit">
    <text evidence="1">Component of the eukaryotic translation initiation factor 3 (eIF-3) complex.</text>
</comment>
<comment type="subcellular location">
    <subcellularLocation>
        <location evidence="1">Cytoplasm</location>
    </subcellularLocation>
</comment>
<comment type="similarity">
    <text evidence="1">Belongs to the eIF-3 subunit B family.</text>
</comment>
<proteinExistence type="inferred from homology"/>
<evidence type="ECO:0000255" key="1">
    <source>
        <dbReference type="HAMAP-Rule" id="MF_03001"/>
    </source>
</evidence>
<evidence type="ECO:0000256" key="2">
    <source>
        <dbReference type="SAM" id="MobiDB-lite"/>
    </source>
</evidence>
<feature type="chain" id="PRO_0000363793" description="Eukaryotic translation initiation factor 3 subunit B">
    <location>
        <begin position="1"/>
        <end position="688"/>
    </location>
</feature>
<feature type="domain" description="RRM" evidence="1">
    <location>
        <begin position="57"/>
        <end position="141"/>
    </location>
</feature>
<feature type="repeat" description="WD 1">
    <location>
        <begin position="208"/>
        <end position="246"/>
    </location>
</feature>
<feature type="repeat" description="WD 2">
    <location>
        <begin position="247"/>
        <end position="287"/>
    </location>
</feature>
<feature type="repeat" description="WD 3">
    <location>
        <begin position="291"/>
        <end position="329"/>
    </location>
</feature>
<feature type="repeat" description="WD 4">
    <location>
        <begin position="332"/>
        <end position="367"/>
    </location>
</feature>
<feature type="repeat" description="WD 5">
    <location>
        <begin position="440"/>
        <end position="482"/>
    </location>
</feature>
<feature type="repeat" description="WD 6">
    <location>
        <begin position="527"/>
        <end position="572"/>
    </location>
</feature>
<feature type="region of interest" description="Disordered" evidence="2">
    <location>
        <begin position="1"/>
        <end position="28"/>
    </location>
</feature>
<feature type="coiled-coil region" evidence="1">
    <location>
        <begin position="612"/>
        <end position="643"/>
    </location>
</feature>
<feature type="compositionally biased region" description="Acidic residues" evidence="2">
    <location>
        <begin position="9"/>
        <end position="25"/>
    </location>
</feature>
<dbReference type="EMBL" id="DS231841">
    <property type="protein sequence ID" value="EDS34809.1"/>
    <property type="molecule type" value="Genomic_DNA"/>
</dbReference>
<dbReference type="SMR" id="B0W562"/>
<dbReference type="FunCoup" id="B0W562">
    <property type="interactions" value="2602"/>
</dbReference>
<dbReference type="STRING" id="7176.B0W562"/>
<dbReference type="EnsemblMetazoa" id="CPIJ002177-RA">
    <property type="protein sequence ID" value="CPIJ002177-PA"/>
    <property type="gene ID" value="CPIJ002177"/>
</dbReference>
<dbReference type="EnsemblMetazoa" id="CQUJHB012397.R19187">
    <property type="protein sequence ID" value="CQUJHB012397.P19187"/>
    <property type="gene ID" value="CQUJHB012397"/>
</dbReference>
<dbReference type="EnsemblMetazoa" id="XM_001843794.2">
    <property type="protein sequence ID" value="XP_001843846.1"/>
    <property type="gene ID" value="LOC6033391"/>
</dbReference>
<dbReference type="GeneID" id="6033391"/>
<dbReference type="KEGG" id="cqu:CpipJ_CPIJ002177"/>
<dbReference type="CTD" id="8662"/>
<dbReference type="VEuPathDB" id="VectorBase:CPIJ002177"/>
<dbReference type="VEuPathDB" id="VectorBase:CQUJHB012397"/>
<dbReference type="eggNOG" id="KOG2314">
    <property type="taxonomic scope" value="Eukaryota"/>
</dbReference>
<dbReference type="HOGENOM" id="CLU_011152_1_0_1"/>
<dbReference type="InParanoid" id="B0W562"/>
<dbReference type="OMA" id="LWGGPQF"/>
<dbReference type="OrthoDB" id="10250414at2759"/>
<dbReference type="PhylomeDB" id="B0W562"/>
<dbReference type="Proteomes" id="UP000002320">
    <property type="component" value="Unassembled WGS sequence"/>
</dbReference>
<dbReference type="GO" id="GO:0016282">
    <property type="term" value="C:eukaryotic 43S preinitiation complex"/>
    <property type="evidence" value="ECO:0007669"/>
    <property type="project" value="UniProtKB-UniRule"/>
</dbReference>
<dbReference type="GO" id="GO:0033290">
    <property type="term" value="C:eukaryotic 48S preinitiation complex"/>
    <property type="evidence" value="ECO:0007669"/>
    <property type="project" value="UniProtKB-UniRule"/>
</dbReference>
<dbReference type="GO" id="GO:0005852">
    <property type="term" value="C:eukaryotic translation initiation factor 3 complex"/>
    <property type="evidence" value="ECO:0000250"/>
    <property type="project" value="UniProtKB"/>
</dbReference>
<dbReference type="GO" id="GO:0003723">
    <property type="term" value="F:RNA binding"/>
    <property type="evidence" value="ECO:0007669"/>
    <property type="project" value="UniProtKB-UniRule"/>
</dbReference>
<dbReference type="GO" id="GO:0003743">
    <property type="term" value="F:translation initiation factor activity"/>
    <property type="evidence" value="ECO:0000250"/>
    <property type="project" value="UniProtKB"/>
</dbReference>
<dbReference type="GO" id="GO:0031369">
    <property type="term" value="F:translation initiation factor binding"/>
    <property type="evidence" value="ECO:0007669"/>
    <property type="project" value="InterPro"/>
</dbReference>
<dbReference type="GO" id="GO:0001732">
    <property type="term" value="P:formation of cytoplasmic translation initiation complex"/>
    <property type="evidence" value="ECO:0007669"/>
    <property type="project" value="UniProtKB-UniRule"/>
</dbReference>
<dbReference type="GO" id="GO:0006446">
    <property type="term" value="P:regulation of translational initiation"/>
    <property type="evidence" value="ECO:0000250"/>
    <property type="project" value="UniProtKB"/>
</dbReference>
<dbReference type="CDD" id="cd12278">
    <property type="entry name" value="RRM_eIF3B"/>
    <property type="match status" value="1"/>
</dbReference>
<dbReference type="FunFam" id="2.130.10.10:FF:001060">
    <property type="entry name" value="Eukaryotic translation initiation factor 3 subunit B"/>
    <property type="match status" value="1"/>
</dbReference>
<dbReference type="FunFam" id="3.30.70.330:FF:000235">
    <property type="entry name" value="Eukaryotic translation initiation factor 3 subunit B"/>
    <property type="match status" value="1"/>
</dbReference>
<dbReference type="Gene3D" id="3.30.70.330">
    <property type="match status" value="1"/>
</dbReference>
<dbReference type="Gene3D" id="2.130.10.10">
    <property type="entry name" value="YVTN repeat-like/Quinoprotein amine dehydrogenase"/>
    <property type="match status" value="1"/>
</dbReference>
<dbReference type="HAMAP" id="MF_03001">
    <property type="entry name" value="eIF3b"/>
    <property type="match status" value="1"/>
</dbReference>
<dbReference type="InterPro" id="IPR011400">
    <property type="entry name" value="EIF3B"/>
</dbReference>
<dbReference type="InterPro" id="IPR034363">
    <property type="entry name" value="eIF3B_RRM"/>
</dbReference>
<dbReference type="InterPro" id="IPR012677">
    <property type="entry name" value="Nucleotide-bd_a/b_plait_sf"/>
</dbReference>
<dbReference type="InterPro" id="IPR035979">
    <property type="entry name" value="RBD_domain_sf"/>
</dbReference>
<dbReference type="InterPro" id="IPR000504">
    <property type="entry name" value="RRM_dom"/>
</dbReference>
<dbReference type="InterPro" id="IPR013979">
    <property type="entry name" value="TIF_beta_prop-like"/>
</dbReference>
<dbReference type="InterPro" id="IPR015943">
    <property type="entry name" value="WD40/YVTN_repeat-like_dom_sf"/>
</dbReference>
<dbReference type="PANTHER" id="PTHR14068">
    <property type="entry name" value="EUKARYOTIC TRANSLATION INITIATION FACTOR 3 EIF3 -RELATED"/>
    <property type="match status" value="1"/>
</dbReference>
<dbReference type="PANTHER" id="PTHR14068:SF0">
    <property type="entry name" value="EUKARYOTIC TRANSLATION INITIATION FACTOR 3 SUBUNIT B"/>
    <property type="match status" value="1"/>
</dbReference>
<dbReference type="Pfam" id="PF08662">
    <property type="entry name" value="eIF2A"/>
    <property type="match status" value="2"/>
</dbReference>
<dbReference type="Pfam" id="PF00076">
    <property type="entry name" value="RRM_1"/>
    <property type="match status" value="1"/>
</dbReference>
<dbReference type="PIRSF" id="PIRSF036424">
    <property type="entry name" value="eIF3b"/>
    <property type="match status" value="1"/>
</dbReference>
<dbReference type="SMART" id="SM00360">
    <property type="entry name" value="RRM"/>
    <property type="match status" value="1"/>
</dbReference>
<dbReference type="SUPFAM" id="SSF82171">
    <property type="entry name" value="DPP6 N-terminal domain-like"/>
    <property type="match status" value="1"/>
</dbReference>
<dbReference type="SUPFAM" id="SSF54928">
    <property type="entry name" value="RNA-binding domain, RBD"/>
    <property type="match status" value="1"/>
</dbReference>
<dbReference type="PROSITE" id="PS50102">
    <property type="entry name" value="RRM"/>
    <property type="match status" value="1"/>
</dbReference>
<accession>B0W562</accession>
<gene>
    <name evidence="1" type="primary">eIF3-S9</name>
    <name type="ORF">CPIJ002177</name>
</gene>